<name>BIOB_MYCBP</name>
<reference key="1">
    <citation type="journal article" date="2007" name="Proc. Natl. Acad. Sci. U.S.A.">
        <title>Genome plasticity of BCG and impact on vaccine efficacy.</title>
        <authorList>
            <person name="Brosch R."/>
            <person name="Gordon S.V."/>
            <person name="Garnier T."/>
            <person name="Eiglmeier K."/>
            <person name="Frigui W."/>
            <person name="Valenti P."/>
            <person name="Dos Santos S."/>
            <person name="Duthoy S."/>
            <person name="Lacroix C."/>
            <person name="Garcia-Pelayo C."/>
            <person name="Inwald J.K."/>
            <person name="Golby P."/>
            <person name="Garcia J.N."/>
            <person name="Hewinson R.G."/>
            <person name="Behr M.A."/>
            <person name="Quail M.A."/>
            <person name="Churcher C."/>
            <person name="Barrell B.G."/>
            <person name="Parkhill J."/>
            <person name="Cole S.T."/>
        </authorList>
    </citation>
    <scope>NUCLEOTIDE SEQUENCE [LARGE SCALE GENOMIC DNA]</scope>
    <source>
        <strain>BCG / Pasteur 1173P2</strain>
    </source>
</reference>
<evidence type="ECO:0000255" key="1">
    <source>
        <dbReference type="HAMAP-Rule" id="MF_01694"/>
    </source>
</evidence>
<evidence type="ECO:0000255" key="2">
    <source>
        <dbReference type="PROSITE-ProRule" id="PRU01266"/>
    </source>
</evidence>
<comment type="function">
    <text evidence="1">Catalyzes the conversion of dethiobiotin (DTB) to biotin by the insertion of a sulfur atom into dethiobiotin via a radical-based mechanism.</text>
</comment>
<comment type="catalytic activity">
    <reaction evidence="1">
        <text>(4R,5S)-dethiobiotin + (sulfur carrier)-SH + 2 reduced [2Fe-2S]-[ferredoxin] + 2 S-adenosyl-L-methionine = (sulfur carrier)-H + biotin + 2 5'-deoxyadenosine + 2 L-methionine + 2 oxidized [2Fe-2S]-[ferredoxin]</text>
        <dbReference type="Rhea" id="RHEA:22060"/>
        <dbReference type="Rhea" id="RHEA-COMP:10000"/>
        <dbReference type="Rhea" id="RHEA-COMP:10001"/>
        <dbReference type="Rhea" id="RHEA-COMP:14737"/>
        <dbReference type="Rhea" id="RHEA-COMP:14739"/>
        <dbReference type="ChEBI" id="CHEBI:17319"/>
        <dbReference type="ChEBI" id="CHEBI:29917"/>
        <dbReference type="ChEBI" id="CHEBI:33737"/>
        <dbReference type="ChEBI" id="CHEBI:33738"/>
        <dbReference type="ChEBI" id="CHEBI:57586"/>
        <dbReference type="ChEBI" id="CHEBI:57844"/>
        <dbReference type="ChEBI" id="CHEBI:59789"/>
        <dbReference type="ChEBI" id="CHEBI:64428"/>
        <dbReference type="ChEBI" id="CHEBI:149473"/>
        <dbReference type="EC" id="2.8.1.6"/>
    </reaction>
</comment>
<comment type="cofactor">
    <cofactor evidence="1">
        <name>[4Fe-4S] cluster</name>
        <dbReference type="ChEBI" id="CHEBI:49883"/>
    </cofactor>
    <text evidence="1">Binds 1 [4Fe-4S] cluster. The cluster is coordinated with 3 cysteines and an exchangeable S-adenosyl-L-methionine.</text>
</comment>
<comment type="cofactor">
    <cofactor evidence="1">
        <name>[2Fe-2S] cluster</name>
        <dbReference type="ChEBI" id="CHEBI:190135"/>
    </cofactor>
    <text evidence="1">Binds 1 [2Fe-2S] cluster. The cluster is coordinated with 3 cysteines and 1 arginine.</text>
</comment>
<comment type="pathway">
    <text evidence="1">Cofactor biosynthesis; biotin biosynthesis; biotin from 7,8-diaminononanoate: step 2/2.</text>
</comment>
<comment type="subunit">
    <text evidence="1">Homodimer.</text>
</comment>
<comment type="similarity">
    <text evidence="1">Belongs to the radical SAM superfamily. Biotin synthase family.</text>
</comment>
<accession>A1KJ05</accession>
<proteinExistence type="inferred from homology"/>
<sequence length="349" mass="37550">MTQAATRPTNDAGQDGGNNSDILVVARQQVLQRGEGLNQDQVLAVLQLPDDRLEELLALAHEVRMRWCGPEVEVEGIISLKTGGCPEDCHFCSQSGLFASPVRSAWLDIPSLVEAAKQTAKSGATEFCIVAAVRGPDERLMAQVAAGIEAIRNEVEINIACSLGMLTAEQVDQLAARGVHRYNHNLETARSFFANVVTTHTWEERWQTLSMVRDAGMEVCCGGILGMGETLQQRAEFAAELAELGPDEVPLNFLNPRPGTPFADLEVMPVGDALKAVAAFRLALPRTMLRFAGGREITLGDLGAKRGILGGINAVIVGNYLTTLGRPAEADLELLDELQMPLKALNASL</sequence>
<organism>
    <name type="scientific">Mycobacterium bovis (strain BCG / Pasteur 1173P2)</name>
    <dbReference type="NCBI Taxonomy" id="410289"/>
    <lineage>
        <taxon>Bacteria</taxon>
        <taxon>Bacillati</taxon>
        <taxon>Actinomycetota</taxon>
        <taxon>Actinomycetes</taxon>
        <taxon>Mycobacteriales</taxon>
        <taxon>Mycobacteriaceae</taxon>
        <taxon>Mycobacterium</taxon>
        <taxon>Mycobacterium tuberculosis complex</taxon>
    </lineage>
</organism>
<dbReference type="EC" id="2.8.1.6" evidence="1"/>
<dbReference type="EMBL" id="AM408590">
    <property type="protein sequence ID" value="CAL71614.1"/>
    <property type="molecule type" value="Genomic_DNA"/>
</dbReference>
<dbReference type="RefSeq" id="WP_003898934.1">
    <property type="nucleotide sequence ID" value="NC_008769.1"/>
</dbReference>
<dbReference type="SMR" id="A1KJ05"/>
<dbReference type="KEGG" id="mbb:BCG_1627"/>
<dbReference type="HOGENOM" id="CLU_033172_2_1_11"/>
<dbReference type="UniPathway" id="UPA00078">
    <property type="reaction ID" value="UER00162"/>
</dbReference>
<dbReference type="Proteomes" id="UP000001472">
    <property type="component" value="Chromosome"/>
</dbReference>
<dbReference type="GO" id="GO:0051537">
    <property type="term" value="F:2 iron, 2 sulfur cluster binding"/>
    <property type="evidence" value="ECO:0007669"/>
    <property type="project" value="UniProtKB-KW"/>
</dbReference>
<dbReference type="GO" id="GO:0051539">
    <property type="term" value="F:4 iron, 4 sulfur cluster binding"/>
    <property type="evidence" value="ECO:0007669"/>
    <property type="project" value="UniProtKB-KW"/>
</dbReference>
<dbReference type="GO" id="GO:0004076">
    <property type="term" value="F:biotin synthase activity"/>
    <property type="evidence" value="ECO:0007669"/>
    <property type="project" value="UniProtKB-UniRule"/>
</dbReference>
<dbReference type="GO" id="GO:0005506">
    <property type="term" value="F:iron ion binding"/>
    <property type="evidence" value="ECO:0007669"/>
    <property type="project" value="UniProtKB-UniRule"/>
</dbReference>
<dbReference type="GO" id="GO:0009102">
    <property type="term" value="P:biotin biosynthetic process"/>
    <property type="evidence" value="ECO:0007669"/>
    <property type="project" value="UniProtKB-UniRule"/>
</dbReference>
<dbReference type="CDD" id="cd01335">
    <property type="entry name" value="Radical_SAM"/>
    <property type="match status" value="1"/>
</dbReference>
<dbReference type="FunFam" id="3.20.20.70:FF:000026">
    <property type="entry name" value="Biotin synthase"/>
    <property type="match status" value="1"/>
</dbReference>
<dbReference type="Gene3D" id="3.20.20.70">
    <property type="entry name" value="Aldolase class I"/>
    <property type="match status" value="1"/>
</dbReference>
<dbReference type="HAMAP" id="MF_01694">
    <property type="entry name" value="BioB"/>
    <property type="match status" value="1"/>
</dbReference>
<dbReference type="InterPro" id="IPR013785">
    <property type="entry name" value="Aldolase_TIM"/>
</dbReference>
<dbReference type="InterPro" id="IPR010722">
    <property type="entry name" value="BATS_dom"/>
</dbReference>
<dbReference type="InterPro" id="IPR002684">
    <property type="entry name" value="Biotin_synth/BioAB"/>
</dbReference>
<dbReference type="InterPro" id="IPR024177">
    <property type="entry name" value="Biotin_synthase"/>
</dbReference>
<dbReference type="InterPro" id="IPR006638">
    <property type="entry name" value="Elp3/MiaA/NifB-like_rSAM"/>
</dbReference>
<dbReference type="InterPro" id="IPR007197">
    <property type="entry name" value="rSAM"/>
</dbReference>
<dbReference type="NCBIfam" id="TIGR00433">
    <property type="entry name" value="bioB"/>
    <property type="match status" value="1"/>
</dbReference>
<dbReference type="PANTHER" id="PTHR22976">
    <property type="entry name" value="BIOTIN SYNTHASE"/>
    <property type="match status" value="1"/>
</dbReference>
<dbReference type="PANTHER" id="PTHR22976:SF2">
    <property type="entry name" value="BIOTIN SYNTHASE, MITOCHONDRIAL"/>
    <property type="match status" value="1"/>
</dbReference>
<dbReference type="Pfam" id="PF06968">
    <property type="entry name" value="BATS"/>
    <property type="match status" value="1"/>
</dbReference>
<dbReference type="Pfam" id="PF04055">
    <property type="entry name" value="Radical_SAM"/>
    <property type="match status" value="1"/>
</dbReference>
<dbReference type="PIRSF" id="PIRSF001619">
    <property type="entry name" value="Biotin_synth"/>
    <property type="match status" value="1"/>
</dbReference>
<dbReference type="SFLD" id="SFLDG01060">
    <property type="entry name" value="BATS_domain_containing"/>
    <property type="match status" value="1"/>
</dbReference>
<dbReference type="SFLD" id="SFLDG01278">
    <property type="entry name" value="biotin_synthase_like"/>
    <property type="match status" value="1"/>
</dbReference>
<dbReference type="SMART" id="SM00876">
    <property type="entry name" value="BATS"/>
    <property type="match status" value="1"/>
</dbReference>
<dbReference type="SMART" id="SM00729">
    <property type="entry name" value="Elp3"/>
    <property type="match status" value="1"/>
</dbReference>
<dbReference type="SUPFAM" id="SSF102114">
    <property type="entry name" value="Radical SAM enzymes"/>
    <property type="match status" value="1"/>
</dbReference>
<dbReference type="PROSITE" id="PS51918">
    <property type="entry name" value="RADICAL_SAM"/>
    <property type="match status" value="1"/>
</dbReference>
<protein>
    <recommendedName>
        <fullName evidence="1">Biotin synthase</fullName>
        <ecNumber evidence="1">2.8.1.6</ecNumber>
    </recommendedName>
</protein>
<feature type="chain" id="PRO_0000381477" description="Biotin synthase">
    <location>
        <begin position="1"/>
        <end position="349"/>
    </location>
</feature>
<feature type="domain" description="Radical SAM core" evidence="2">
    <location>
        <begin position="70"/>
        <end position="295"/>
    </location>
</feature>
<feature type="binding site" evidence="1">
    <location>
        <position position="85"/>
    </location>
    <ligand>
        <name>[4Fe-4S] cluster</name>
        <dbReference type="ChEBI" id="CHEBI:49883"/>
        <note>4Fe-4S-S-AdoMet</note>
    </ligand>
</feature>
<feature type="binding site" evidence="1">
    <location>
        <position position="89"/>
    </location>
    <ligand>
        <name>[4Fe-4S] cluster</name>
        <dbReference type="ChEBI" id="CHEBI:49883"/>
        <note>4Fe-4S-S-AdoMet</note>
    </ligand>
</feature>
<feature type="binding site" evidence="1">
    <location>
        <position position="92"/>
    </location>
    <ligand>
        <name>[4Fe-4S] cluster</name>
        <dbReference type="ChEBI" id="CHEBI:49883"/>
        <note>4Fe-4S-S-AdoMet</note>
    </ligand>
</feature>
<feature type="binding site" evidence="1">
    <location>
        <position position="128"/>
    </location>
    <ligand>
        <name>[2Fe-2S] cluster</name>
        <dbReference type="ChEBI" id="CHEBI:190135"/>
    </ligand>
</feature>
<feature type="binding site" evidence="1">
    <location>
        <position position="161"/>
    </location>
    <ligand>
        <name>[2Fe-2S] cluster</name>
        <dbReference type="ChEBI" id="CHEBI:190135"/>
    </ligand>
</feature>
<feature type="binding site" evidence="1">
    <location>
        <position position="220"/>
    </location>
    <ligand>
        <name>[2Fe-2S] cluster</name>
        <dbReference type="ChEBI" id="CHEBI:190135"/>
    </ligand>
</feature>
<feature type="binding site" evidence="1">
    <location>
        <position position="290"/>
    </location>
    <ligand>
        <name>[2Fe-2S] cluster</name>
        <dbReference type="ChEBI" id="CHEBI:190135"/>
    </ligand>
</feature>
<keyword id="KW-0001">2Fe-2S</keyword>
<keyword id="KW-0004">4Fe-4S</keyword>
<keyword id="KW-0093">Biotin biosynthesis</keyword>
<keyword id="KW-0408">Iron</keyword>
<keyword id="KW-0411">Iron-sulfur</keyword>
<keyword id="KW-0479">Metal-binding</keyword>
<keyword id="KW-0949">S-adenosyl-L-methionine</keyword>
<keyword id="KW-0808">Transferase</keyword>
<gene>
    <name evidence="1" type="primary">bioB</name>
    <name type="ordered locus">BCG_1627</name>
</gene>